<evidence type="ECO:0000250" key="1"/>
<evidence type="ECO:0000250" key="2">
    <source>
        <dbReference type="UniProtKB" id="P10599"/>
    </source>
</evidence>
<evidence type="ECO:0000250" key="3">
    <source>
        <dbReference type="UniProtKB" id="P10639"/>
    </source>
</evidence>
<evidence type="ECO:0000255" key="4">
    <source>
        <dbReference type="PROSITE-ProRule" id="PRU00691"/>
    </source>
</evidence>
<evidence type="ECO:0000269" key="5">
    <source ref="2"/>
</evidence>
<evidence type="ECO:0000305" key="6"/>
<feature type="initiator methionine" description="Removed" evidence="5">
    <location>
        <position position="1"/>
    </location>
</feature>
<feature type="chain" id="PRO_0000120008" description="Thioredoxin">
    <location>
        <begin position="2"/>
        <end position="105"/>
    </location>
</feature>
<feature type="domain" description="Thioredoxin" evidence="4">
    <location>
        <begin position="2"/>
        <end position="105"/>
    </location>
</feature>
<feature type="active site" description="Nucleophile" evidence="1">
    <location>
        <position position="32"/>
    </location>
</feature>
<feature type="active site" description="Nucleophile" evidence="1">
    <location>
        <position position="35"/>
    </location>
</feature>
<feature type="site" description="Deprotonates C-terminal active site Cys" evidence="1">
    <location>
        <position position="26"/>
    </location>
</feature>
<feature type="site" description="Contributes to redox potential value" evidence="1">
    <location>
        <position position="33"/>
    </location>
</feature>
<feature type="site" description="Contributes to redox potential value" evidence="1">
    <location>
        <position position="34"/>
    </location>
</feature>
<feature type="modified residue" description="N6-acetyllysine" evidence="2">
    <location>
        <position position="3"/>
    </location>
</feature>
<feature type="modified residue" description="N6-succinyllysine" evidence="3">
    <location>
        <position position="8"/>
    </location>
</feature>
<feature type="modified residue" description="N6-acetyllysine" evidence="2">
    <location>
        <position position="39"/>
    </location>
</feature>
<feature type="modified residue" description="S-nitrosocysteine" evidence="2">
    <location>
        <position position="62"/>
    </location>
</feature>
<feature type="modified residue" description="S-nitrosocysteine" evidence="2">
    <location>
        <position position="69"/>
    </location>
</feature>
<feature type="modified residue" description="S-nitrosocysteine; alternate" evidence="2">
    <location>
        <position position="73"/>
    </location>
</feature>
<feature type="modified residue" description="N6-acetyllysine; alternate" evidence="3">
    <location>
        <position position="94"/>
    </location>
</feature>
<feature type="modified residue" description="N6-succinyllysine; alternate" evidence="3">
    <location>
        <position position="94"/>
    </location>
</feature>
<feature type="disulfide bond" description="Redox-active" evidence="4">
    <location>
        <begin position="32"/>
        <end position="35"/>
    </location>
</feature>
<feature type="disulfide bond" description="Interchain; alternate" evidence="1">
    <location>
        <position position="73"/>
    </location>
</feature>
<organism>
    <name type="scientific">Sus scrofa</name>
    <name type="common">Pig</name>
    <dbReference type="NCBI Taxonomy" id="9823"/>
    <lineage>
        <taxon>Eukaryota</taxon>
        <taxon>Metazoa</taxon>
        <taxon>Chordata</taxon>
        <taxon>Craniata</taxon>
        <taxon>Vertebrata</taxon>
        <taxon>Euteleostomi</taxon>
        <taxon>Mammalia</taxon>
        <taxon>Eutheria</taxon>
        <taxon>Laurasiatheria</taxon>
        <taxon>Artiodactyla</taxon>
        <taxon>Suina</taxon>
        <taxon>Suidae</taxon>
        <taxon>Sus</taxon>
    </lineage>
</organism>
<sequence length="105" mass="11829">MVKQIESKYAFQEALNSAGEKLVVVDFSATWCGPCKMIKPFFHSLSEKYSNVVFLEVDVDDCQDVASECEVKCMPTFQFFKKGQKVGEFSGANKEKLEATINELI</sequence>
<accession>P82460</accession>
<accession>Q95JF9</accession>
<proteinExistence type="evidence at protein level"/>
<protein>
    <recommendedName>
        <fullName>Thioredoxin</fullName>
        <shortName>Trx</shortName>
    </recommendedName>
</protein>
<comment type="function">
    <text evidence="1">Participates in various redox reactions through the reversible oxidation of its active center dithiol to a disulfide and catalyzes dithiol-disulfide exchange reactions (By similarity). Plays a role in the reversible S-nitrosylation of cysteine residues in target proteins, and thereby contributes to the response to intracellular nitric oxide. Nitrosylates the active site Cys of CASP3 in response to nitric oxide (NO), and thereby inhibits caspase-3 activity. Induces the FOS/JUN AP-1 DNA binding activity in ionizing radiation (IR) cells through its oxidation/reduction status and stimulates AP-1 transcriptional activity (By similarity).</text>
</comment>
<comment type="subunit">
    <text evidence="1">Homodimer; disulfide-linked. Interacts with TXNIP through the redox-active site. Interacts with MAP3K5 and CASP3. Interacts with APEX1; the interaction stimulates the FOS/JUN AP-1 DNA-binding activity in a redox-dependent manner (By similarity).</text>
</comment>
<comment type="subcellular location">
    <subcellularLocation>
        <location evidence="2">Nucleus</location>
    </subcellularLocation>
    <subcellularLocation>
        <location evidence="2">Cytoplasm</location>
    </subcellularLocation>
    <subcellularLocation>
        <location evidence="2">Secreted</location>
    </subcellularLocation>
    <text evidence="2">Translocates from the cytoplasm into the nucleus after phorbol 12-myristate 13-acetate induction (PMA). Predominantly in the cytoplasm in non irradiated cells. Radiation induces translocation of TRX from the cytoplasm to the nucleus. Secreted by a leaderless secretory pathway.</text>
</comment>
<comment type="tissue specificity">
    <text>Erythrocytes.</text>
</comment>
<comment type="PTM">
    <text evidence="1">In the fully reduced protein, both Cys-69 and Cys-73 are nitrosylated in response to nitric oxide (NO). When two disulfide bonds are present in the protein, only Cys-73 is nitrosylated. Cys-73 can serve as donor for nitrosylation of target proteins (By similarity).</text>
</comment>
<comment type="similarity">
    <text evidence="6">Belongs to the thioredoxin family.</text>
</comment>
<reference key="1">
    <citation type="submission" date="2001-05" db="EMBL/GenBank/DDBJ databases">
        <title>The cloning and expression of porcine thioredoxin in E. coli.</title>
        <authorList>
            <person name="Yu G.W."/>
            <person name="Xu J.Y."/>
            <person name="Xu L."/>
            <person name="Cheung P.Y."/>
            <person name="Lee K.S."/>
        </authorList>
    </citation>
    <scope>NUCLEOTIDE SEQUENCE [MRNA]</scope>
    <source>
        <tissue>Liver</tissue>
    </source>
</reference>
<reference key="2">
    <citation type="submission" date="2000-05" db="UniProtKB">
        <authorList>
            <person name="Lee K.S."/>
            <person name="Tang W.K."/>
            <person name="Cheung P.Y."/>
            <person name="Siu Y.L."/>
            <person name="Wong N.S."/>
        </authorList>
    </citation>
    <scope>PROTEIN SEQUENCE OF 2-34</scope>
    <source>
        <tissue>Erythrocyte</tissue>
    </source>
</reference>
<gene>
    <name type="primary">TXN</name>
</gene>
<dbReference type="EMBL" id="AF382821">
    <property type="protein sequence ID" value="AAK60272.1"/>
    <property type="molecule type" value="mRNA"/>
</dbReference>
<dbReference type="RefSeq" id="NP_999478.1">
    <property type="nucleotide sequence ID" value="NM_214313.2"/>
</dbReference>
<dbReference type="SMR" id="P82460"/>
<dbReference type="FunCoup" id="P82460">
    <property type="interactions" value="1197"/>
</dbReference>
<dbReference type="STRING" id="9823.ENSSSCP00000060083"/>
<dbReference type="PaxDb" id="9823-ENSSSCP00000005849"/>
<dbReference type="PeptideAtlas" id="P82460"/>
<dbReference type="Ensembl" id="ENSSSCT00115011448">
    <property type="protein sequence ID" value="ENSSSCP00115010802"/>
    <property type="gene ID" value="ENSSSCG00115006594"/>
</dbReference>
<dbReference type="GeneID" id="397581"/>
<dbReference type="KEGG" id="ssc:397581"/>
<dbReference type="CTD" id="7295"/>
<dbReference type="eggNOG" id="KOG0907">
    <property type="taxonomic scope" value="Eukaryota"/>
</dbReference>
<dbReference type="HOGENOM" id="CLU_090389_14_6_1"/>
<dbReference type="InParanoid" id="P82460"/>
<dbReference type="OMA" id="CYADWCS"/>
<dbReference type="OrthoDB" id="2121326at2759"/>
<dbReference type="TreeFam" id="TF318932"/>
<dbReference type="Proteomes" id="UP000008227">
    <property type="component" value="Unplaced"/>
</dbReference>
<dbReference type="Proteomes" id="UP000314985">
    <property type="component" value="Unplaced"/>
</dbReference>
<dbReference type="Proteomes" id="UP000694570">
    <property type="component" value="Unplaced"/>
</dbReference>
<dbReference type="Proteomes" id="UP000694571">
    <property type="component" value="Unplaced"/>
</dbReference>
<dbReference type="Proteomes" id="UP000694720">
    <property type="component" value="Unplaced"/>
</dbReference>
<dbReference type="Proteomes" id="UP000694722">
    <property type="component" value="Unplaced"/>
</dbReference>
<dbReference type="Proteomes" id="UP000694723">
    <property type="component" value="Unplaced"/>
</dbReference>
<dbReference type="Proteomes" id="UP000694724">
    <property type="component" value="Unplaced"/>
</dbReference>
<dbReference type="Proteomes" id="UP000694725">
    <property type="component" value="Unplaced"/>
</dbReference>
<dbReference type="Proteomes" id="UP000694726">
    <property type="component" value="Unplaced"/>
</dbReference>
<dbReference type="Proteomes" id="UP000694727">
    <property type="component" value="Unplaced"/>
</dbReference>
<dbReference type="Proteomes" id="UP000694728">
    <property type="component" value="Unplaced"/>
</dbReference>
<dbReference type="GO" id="GO:0005737">
    <property type="term" value="C:cytoplasm"/>
    <property type="evidence" value="ECO:0007669"/>
    <property type="project" value="UniProtKB-SubCell"/>
</dbReference>
<dbReference type="GO" id="GO:0005576">
    <property type="term" value="C:extracellular region"/>
    <property type="evidence" value="ECO:0007669"/>
    <property type="project" value="UniProtKB-SubCell"/>
</dbReference>
<dbReference type="GO" id="GO:0005634">
    <property type="term" value="C:nucleus"/>
    <property type="evidence" value="ECO:0007669"/>
    <property type="project" value="UniProtKB-SubCell"/>
</dbReference>
<dbReference type="GO" id="GO:0015035">
    <property type="term" value="F:protein-disulfide reductase activity"/>
    <property type="evidence" value="ECO:0007669"/>
    <property type="project" value="InterPro"/>
</dbReference>
<dbReference type="GO" id="GO:0043388">
    <property type="term" value="P:positive regulation of DNA binding"/>
    <property type="evidence" value="ECO:0000250"/>
    <property type="project" value="UniProtKB"/>
</dbReference>
<dbReference type="GO" id="GO:0009314">
    <property type="term" value="P:response to radiation"/>
    <property type="evidence" value="ECO:0000250"/>
    <property type="project" value="UniProtKB"/>
</dbReference>
<dbReference type="CDD" id="cd02947">
    <property type="entry name" value="TRX_family"/>
    <property type="match status" value="1"/>
</dbReference>
<dbReference type="FunFam" id="3.40.30.10:FF:000130">
    <property type="entry name" value="Thioredoxin"/>
    <property type="match status" value="1"/>
</dbReference>
<dbReference type="Gene3D" id="3.40.30.10">
    <property type="entry name" value="Glutaredoxin"/>
    <property type="match status" value="1"/>
</dbReference>
<dbReference type="InterPro" id="IPR005746">
    <property type="entry name" value="Thioredoxin"/>
</dbReference>
<dbReference type="InterPro" id="IPR036249">
    <property type="entry name" value="Thioredoxin-like_sf"/>
</dbReference>
<dbReference type="InterPro" id="IPR017937">
    <property type="entry name" value="Thioredoxin_CS"/>
</dbReference>
<dbReference type="InterPro" id="IPR013766">
    <property type="entry name" value="Thioredoxin_domain"/>
</dbReference>
<dbReference type="PANTHER" id="PTHR46115">
    <property type="entry name" value="THIOREDOXIN-LIKE PROTEIN 1"/>
    <property type="match status" value="1"/>
</dbReference>
<dbReference type="Pfam" id="PF00085">
    <property type="entry name" value="Thioredoxin"/>
    <property type="match status" value="1"/>
</dbReference>
<dbReference type="PIRSF" id="PIRSF000077">
    <property type="entry name" value="Thioredoxin"/>
    <property type="match status" value="1"/>
</dbReference>
<dbReference type="PRINTS" id="PR00421">
    <property type="entry name" value="THIOREDOXIN"/>
</dbReference>
<dbReference type="SUPFAM" id="SSF52833">
    <property type="entry name" value="Thioredoxin-like"/>
    <property type="match status" value="1"/>
</dbReference>
<dbReference type="PROSITE" id="PS00194">
    <property type="entry name" value="THIOREDOXIN_1"/>
    <property type="match status" value="1"/>
</dbReference>
<dbReference type="PROSITE" id="PS51352">
    <property type="entry name" value="THIOREDOXIN_2"/>
    <property type="match status" value="1"/>
</dbReference>
<keyword id="KW-0007">Acetylation</keyword>
<keyword id="KW-0010">Activator</keyword>
<keyword id="KW-0963">Cytoplasm</keyword>
<keyword id="KW-0903">Direct protein sequencing</keyword>
<keyword id="KW-1015">Disulfide bond</keyword>
<keyword id="KW-0249">Electron transport</keyword>
<keyword id="KW-0539">Nucleus</keyword>
<keyword id="KW-0676">Redox-active center</keyword>
<keyword id="KW-1185">Reference proteome</keyword>
<keyword id="KW-0702">S-nitrosylation</keyword>
<keyword id="KW-0964">Secreted</keyword>
<keyword id="KW-0804">Transcription</keyword>
<keyword id="KW-0805">Transcription regulation</keyword>
<keyword id="KW-0813">Transport</keyword>
<name>THIO_PIG</name>